<reference key="1">
    <citation type="journal article" date="2003" name="J. Biol. Chem.">
        <title>Molecular identification and characterization of a novel nuclear protein whose expression is up-regulated in insulin-resistant animals.</title>
        <authorList>
            <person name="Ikeda K."/>
            <person name="Emoto N."/>
            <person name="Matsuo M."/>
            <person name="Yokoyama M."/>
        </authorList>
    </citation>
    <scope>NUCLEOTIDE SEQUENCE [MRNA] (ISOFORM 1)</scope>
    <scope>TISSUE SPECIFICITY</scope>
    <source>
        <tissue>Skeletal muscle</tissue>
    </source>
</reference>
<reference key="2">
    <citation type="journal article" date="2003" name="J. Mol. Biol.">
        <title>The muscle ankyrin repeat proteins: CARP, ankrd2/Arpp and DARP as a family of titin filament-based stress response molecules.</title>
        <authorList>
            <person name="Miller M.K."/>
            <person name="Bang M.-L."/>
            <person name="Witt C.C."/>
            <person name="Labeit D."/>
            <person name="Trombitas C."/>
            <person name="Watanabe K."/>
            <person name="Granzier H."/>
            <person name="McElhinny A.S."/>
            <person name="Gregorio C.C."/>
            <person name="Labeit S."/>
        </authorList>
    </citation>
    <scope>NUCLEOTIDE SEQUENCE [MRNA] (ISOFORM 1)</scope>
    <scope>INTERACTION WITH TTN AND MYPN</scope>
    <source>
        <tissue>Skeletal muscle</tissue>
    </source>
</reference>
<reference key="3">
    <citation type="journal article" date="2004" name="Nat. Genet.">
        <title>Complete sequencing and characterization of 21,243 full-length human cDNAs.</title>
        <authorList>
            <person name="Ota T."/>
            <person name="Suzuki Y."/>
            <person name="Nishikawa T."/>
            <person name="Otsuki T."/>
            <person name="Sugiyama T."/>
            <person name="Irie R."/>
            <person name="Wakamatsu A."/>
            <person name="Hayashi K."/>
            <person name="Sato H."/>
            <person name="Nagai K."/>
            <person name="Kimura K."/>
            <person name="Makita H."/>
            <person name="Sekine M."/>
            <person name="Obayashi M."/>
            <person name="Nishi T."/>
            <person name="Shibahara T."/>
            <person name="Tanaka T."/>
            <person name="Ishii S."/>
            <person name="Yamamoto J."/>
            <person name="Saito K."/>
            <person name="Kawai Y."/>
            <person name="Isono Y."/>
            <person name="Nakamura Y."/>
            <person name="Nagahari K."/>
            <person name="Murakami K."/>
            <person name="Yasuda T."/>
            <person name="Iwayanagi T."/>
            <person name="Wagatsuma M."/>
            <person name="Shiratori A."/>
            <person name="Sudo H."/>
            <person name="Hosoiri T."/>
            <person name="Kaku Y."/>
            <person name="Kodaira H."/>
            <person name="Kondo H."/>
            <person name="Sugawara M."/>
            <person name="Takahashi M."/>
            <person name="Kanda K."/>
            <person name="Yokoi T."/>
            <person name="Furuya T."/>
            <person name="Kikkawa E."/>
            <person name="Omura Y."/>
            <person name="Abe K."/>
            <person name="Kamihara K."/>
            <person name="Katsuta N."/>
            <person name="Sato K."/>
            <person name="Tanikawa M."/>
            <person name="Yamazaki M."/>
            <person name="Ninomiya K."/>
            <person name="Ishibashi T."/>
            <person name="Yamashita H."/>
            <person name="Murakawa K."/>
            <person name="Fujimori K."/>
            <person name="Tanai H."/>
            <person name="Kimata M."/>
            <person name="Watanabe M."/>
            <person name="Hiraoka S."/>
            <person name="Chiba Y."/>
            <person name="Ishida S."/>
            <person name="Ono Y."/>
            <person name="Takiguchi S."/>
            <person name="Watanabe S."/>
            <person name="Yosida M."/>
            <person name="Hotuta T."/>
            <person name="Kusano J."/>
            <person name="Kanehori K."/>
            <person name="Takahashi-Fujii A."/>
            <person name="Hara H."/>
            <person name="Tanase T.-O."/>
            <person name="Nomura Y."/>
            <person name="Togiya S."/>
            <person name="Komai F."/>
            <person name="Hara R."/>
            <person name="Takeuchi K."/>
            <person name="Arita M."/>
            <person name="Imose N."/>
            <person name="Musashino K."/>
            <person name="Yuuki H."/>
            <person name="Oshima A."/>
            <person name="Sasaki N."/>
            <person name="Aotsuka S."/>
            <person name="Yoshikawa Y."/>
            <person name="Matsunawa H."/>
            <person name="Ichihara T."/>
            <person name="Shiohata N."/>
            <person name="Sano S."/>
            <person name="Moriya S."/>
            <person name="Momiyama H."/>
            <person name="Satoh N."/>
            <person name="Takami S."/>
            <person name="Terashima Y."/>
            <person name="Suzuki O."/>
            <person name="Nakagawa S."/>
            <person name="Senoh A."/>
            <person name="Mizoguchi H."/>
            <person name="Goto Y."/>
            <person name="Shimizu F."/>
            <person name="Wakebe H."/>
            <person name="Hishigaki H."/>
            <person name="Watanabe T."/>
            <person name="Sugiyama A."/>
            <person name="Takemoto M."/>
            <person name="Kawakami B."/>
            <person name="Yamazaki M."/>
            <person name="Watanabe K."/>
            <person name="Kumagai A."/>
            <person name="Itakura S."/>
            <person name="Fukuzumi Y."/>
            <person name="Fujimori Y."/>
            <person name="Komiyama M."/>
            <person name="Tashiro H."/>
            <person name="Tanigami A."/>
            <person name="Fujiwara T."/>
            <person name="Ono T."/>
            <person name="Yamada K."/>
            <person name="Fujii Y."/>
            <person name="Ozaki K."/>
            <person name="Hirao M."/>
            <person name="Ohmori Y."/>
            <person name="Kawabata A."/>
            <person name="Hikiji T."/>
            <person name="Kobatake N."/>
            <person name="Inagaki H."/>
            <person name="Ikema Y."/>
            <person name="Okamoto S."/>
            <person name="Okitani R."/>
            <person name="Kawakami T."/>
            <person name="Noguchi S."/>
            <person name="Itoh T."/>
            <person name="Shigeta K."/>
            <person name="Senba T."/>
            <person name="Matsumura K."/>
            <person name="Nakajima Y."/>
            <person name="Mizuno T."/>
            <person name="Morinaga M."/>
            <person name="Sasaki M."/>
            <person name="Togashi T."/>
            <person name="Oyama M."/>
            <person name="Hata H."/>
            <person name="Watanabe M."/>
            <person name="Komatsu T."/>
            <person name="Mizushima-Sugano J."/>
            <person name="Satoh T."/>
            <person name="Shirai Y."/>
            <person name="Takahashi Y."/>
            <person name="Nakagawa K."/>
            <person name="Okumura K."/>
            <person name="Nagase T."/>
            <person name="Nomura N."/>
            <person name="Kikuchi H."/>
            <person name="Masuho Y."/>
            <person name="Yamashita R."/>
            <person name="Nakai K."/>
            <person name="Yada T."/>
            <person name="Nakamura Y."/>
            <person name="Ohara O."/>
            <person name="Isogai T."/>
            <person name="Sugano S."/>
        </authorList>
    </citation>
    <scope>NUCLEOTIDE SEQUENCE [LARGE SCALE MRNA] (ISOFORM 2)</scope>
    <source>
        <tissue>Prostate</tissue>
    </source>
</reference>
<reference key="4">
    <citation type="journal article" date="2005" name="Nature">
        <title>Generation and annotation of the DNA sequences of human chromosomes 2 and 4.</title>
        <authorList>
            <person name="Hillier L.W."/>
            <person name="Graves T.A."/>
            <person name="Fulton R.S."/>
            <person name="Fulton L.A."/>
            <person name="Pepin K.H."/>
            <person name="Minx P."/>
            <person name="Wagner-McPherson C."/>
            <person name="Layman D."/>
            <person name="Wylie K."/>
            <person name="Sekhon M."/>
            <person name="Becker M.C."/>
            <person name="Fewell G.A."/>
            <person name="Delehaunty K.D."/>
            <person name="Miner T.L."/>
            <person name="Nash W.E."/>
            <person name="Kremitzki C."/>
            <person name="Oddy L."/>
            <person name="Du H."/>
            <person name="Sun H."/>
            <person name="Bradshaw-Cordum H."/>
            <person name="Ali J."/>
            <person name="Carter J."/>
            <person name="Cordes M."/>
            <person name="Harris A."/>
            <person name="Isak A."/>
            <person name="van Brunt A."/>
            <person name="Nguyen C."/>
            <person name="Du F."/>
            <person name="Courtney L."/>
            <person name="Kalicki J."/>
            <person name="Ozersky P."/>
            <person name="Abbott S."/>
            <person name="Armstrong J."/>
            <person name="Belter E.A."/>
            <person name="Caruso L."/>
            <person name="Cedroni M."/>
            <person name="Cotton M."/>
            <person name="Davidson T."/>
            <person name="Desai A."/>
            <person name="Elliott G."/>
            <person name="Erb T."/>
            <person name="Fronick C."/>
            <person name="Gaige T."/>
            <person name="Haakenson W."/>
            <person name="Haglund K."/>
            <person name="Holmes A."/>
            <person name="Harkins R."/>
            <person name="Kim K."/>
            <person name="Kruchowski S.S."/>
            <person name="Strong C.M."/>
            <person name="Grewal N."/>
            <person name="Goyea E."/>
            <person name="Hou S."/>
            <person name="Levy A."/>
            <person name="Martinka S."/>
            <person name="Mead K."/>
            <person name="McLellan M.D."/>
            <person name="Meyer R."/>
            <person name="Randall-Maher J."/>
            <person name="Tomlinson C."/>
            <person name="Dauphin-Kohlberg S."/>
            <person name="Kozlowicz-Reilly A."/>
            <person name="Shah N."/>
            <person name="Swearengen-Shahid S."/>
            <person name="Snider J."/>
            <person name="Strong J.T."/>
            <person name="Thompson J."/>
            <person name="Yoakum M."/>
            <person name="Leonard S."/>
            <person name="Pearman C."/>
            <person name="Trani L."/>
            <person name="Radionenko M."/>
            <person name="Waligorski J.E."/>
            <person name="Wang C."/>
            <person name="Rock S.M."/>
            <person name="Tin-Wollam A.-M."/>
            <person name="Maupin R."/>
            <person name="Latreille P."/>
            <person name="Wendl M.C."/>
            <person name="Yang S.-P."/>
            <person name="Pohl C."/>
            <person name="Wallis J.W."/>
            <person name="Spieth J."/>
            <person name="Bieri T.A."/>
            <person name="Berkowicz N."/>
            <person name="Nelson J.O."/>
            <person name="Osborne J."/>
            <person name="Ding L."/>
            <person name="Meyer R."/>
            <person name="Sabo A."/>
            <person name="Shotland Y."/>
            <person name="Sinha P."/>
            <person name="Wohldmann P.E."/>
            <person name="Cook L.L."/>
            <person name="Hickenbotham M.T."/>
            <person name="Eldred J."/>
            <person name="Williams D."/>
            <person name="Jones T.A."/>
            <person name="She X."/>
            <person name="Ciccarelli F.D."/>
            <person name="Izaurralde E."/>
            <person name="Taylor J."/>
            <person name="Schmutz J."/>
            <person name="Myers R.M."/>
            <person name="Cox D.R."/>
            <person name="Huang X."/>
            <person name="McPherson J.D."/>
            <person name="Mardis E.R."/>
            <person name="Clifton S.W."/>
            <person name="Warren W.C."/>
            <person name="Chinwalla A.T."/>
            <person name="Eddy S.R."/>
            <person name="Marra M.A."/>
            <person name="Ovcharenko I."/>
            <person name="Furey T.S."/>
            <person name="Miller W."/>
            <person name="Eichler E.E."/>
            <person name="Bork P."/>
            <person name="Suyama M."/>
            <person name="Torrents D."/>
            <person name="Waterston R.H."/>
            <person name="Wilson R.K."/>
        </authorList>
    </citation>
    <scope>NUCLEOTIDE SEQUENCE [LARGE SCALE GENOMIC DNA]</scope>
</reference>
<reference key="5">
    <citation type="journal article" date="2004" name="Genome Res.">
        <title>The status, quality, and expansion of the NIH full-length cDNA project: the Mammalian Gene Collection (MGC).</title>
        <authorList>
            <consortium name="The MGC Project Team"/>
        </authorList>
    </citation>
    <scope>NUCLEOTIDE SEQUENCE [LARGE SCALE MRNA] (ISOFORM 1)</scope>
</reference>
<reference key="6">
    <citation type="submission" date="2001-07" db="EMBL/GenBank/DDBJ databases">
        <title>Full length sequencing of some human and murine muscular transcripts, (Telethon Italy project B41).</title>
        <authorList>
            <person name="Ievolella C."/>
            <person name="Zara I."/>
            <person name="Frigimelica E."/>
            <person name="Lanfranchi G."/>
        </authorList>
    </citation>
    <scope>NUCLEOTIDE SEQUENCE [LARGE SCALE MRNA] OF 10-305 (ISOFORM 1)</scope>
    <source>
        <tissue>Skeletal muscle</tissue>
    </source>
</reference>
<feature type="chain" id="PRO_0000240666" description="Ankyrin repeat domain-containing protein 23">
    <location>
        <begin position="1"/>
        <end position="305"/>
    </location>
</feature>
<feature type="repeat" description="ANK 1">
    <location>
        <begin position="143"/>
        <end position="172"/>
    </location>
</feature>
<feature type="repeat" description="ANK 2">
    <location>
        <begin position="176"/>
        <end position="205"/>
    </location>
</feature>
<feature type="repeat" description="ANK 3">
    <location>
        <begin position="209"/>
        <end position="238"/>
    </location>
</feature>
<feature type="repeat" description="ANK 4">
    <location>
        <begin position="242"/>
        <end position="271"/>
    </location>
</feature>
<feature type="region of interest" description="Disordered" evidence="3">
    <location>
        <begin position="83"/>
        <end position="104"/>
    </location>
</feature>
<feature type="region of interest" description="Interaction with TTN" evidence="5">
    <location>
        <begin position="178"/>
        <end position="195"/>
    </location>
</feature>
<feature type="coiled-coil region" evidence="2">
    <location>
        <begin position="41"/>
        <end position="72"/>
    </location>
</feature>
<feature type="compositionally biased region" description="Basic residues" evidence="3">
    <location>
        <begin position="83"/>
        <end position="92"/>
    </location>
</feature>
<feature type="splice variant" id="VSP_019424" description="In isoform 2." evidence="6">
    <location>
        <begin position="101"/>
        <end position="142"/>
    </location>
</feature>
<feature type="sequence conflict" description="In Ref. 6; CAC86120." evidence="7" ref="6">
    <original>K</original>
    <variation>N</variation>
    <location>
        <position position="57"/>
    </location>
</feature>
<feature type="sequence conflict" description="In Ref. 3; BAC03915." evidence="7" ref="3">
    <original>V</original>
    <variation>L</variation>
    <location>
        <position position="277"/>
    </location>
</feature>
<dbReference type="EMBL" id="AF492401">
    <property type="protein sequence ID" value="AAO24067.1"/>
    <property type="molecule type" value="mRNA"/>
</dbReference>
<dbReference type="EMBL" id="AY196212">
    <property type="protein sequence ID" value="AAO40750.1"/>
    <property type="molecule type" value="mRNA"/>
</dbReference>
<dbReference type="EMBL" id="AK092564">
    <property type="protein sequence ID" value="BAC03915.1"/>
    <property type="molecule type" value="mRNA"/>
</dbReference>
<dbReference type="EMBL" id="AC092636">
    <property type="protein sequence ID" value="AAY14965.1"/>
    <property type="molecule type" value="Genomic_DNA"/>
</dbReference>
<dbReference type="EMBL" id="BC107056">
    <property type="protein sequence ID" value="AAI07057.1"/>
    <property type="molecule type" value="mRNA"/>
</dbReference>
<dbReference type="EMBL" id="AJ315766">
    <property type="protein sequence ID" value="CAC86120.1"/>
    <property type="molecule type" value="mRNA"/>
</dbReference>
<dbReference type="CCDS" id="CCDS2027.1">
    <molecule id="Q86SG2-1"/>
</dbReference>
<dbReference type="RefSeq" id="NP_659431.5">
    <molecule id="Q86SG2-1"/>
    <property type="nucleotide sequence ID" value="NM_144994.7"/>
</dbReference>
<dbReference type="SMR" id="Q86SG2"/>
<dbReference type="BioGRID" id="128333">
    <property type="interactions" value="20"/>
</dbReference>
<dbReference type="FunCoup" id="Q86SG2">
    <property type="interactions" value="669"/>
</dbReference>
<dbReference type="IntAct" id="Q86SG2">
    <property type="interactions" value="24"/>
</dbReference>
<dbReference type="STRING" id="9606.ENSP00000321679"/>
<dbReference type="PhosphoSitePlus" id="Q86SG2"/>
<dbReference type="BioMuta" id="ANKRD23"/>
<dbReference type="DMDM" id="74723447"/>
<dbReference type="jPOST" id="Q86SG2"/>
<dbReference type="MassIVE" id="Q86SG2"/>
<dbReference type="PaxDb" id="9606-ENSP00000321679"/>
<dbReference type="PeptideAtlas" id="Q86SG2"/>
<dbReference type="Antibodypedia" id="52591">
    <property type="antibodies" value="42 antibodies from 13 providers"/>
</dbReference>
<dbReference type="DNASU" id="200539"/>
<dbReference type="Ensembl" id="ENST00000318357.9">
    <molecule id="Q86SG2-1"/>
    <property type="protein sequence ID" value="ENSP00000321679.4"/>
    <property type="gene ID" value="ENSG00000163126.15"/>
</dbReference>
<dbReference type="Ensembl" id="ENST00000331001.2">
    <molecule id="Q86SG2-2"/>
    <property type="protein sequence ID" value="ENSP00000333108.2"/>
    <property type="gene ID" value="ENSG00000163126.15"/>
</dbReference>
<dbReference type="Ensembl" id="ENST00000418232.5">
    <molecule id="Q86SG2-1"/>
    <property type="protein sequence ID" value="ENSP00000398987.1"/>
    <property type="gene ID" value="ENSG00000163126.15"/>
</dbReference>
<dbReference type="GeneID" id="200539"/>
<dbReference type="KEGG" id="hsa:200539"/>
<dbReference type="MANE-Select" id="ENST00000318357.9">
    <property type="protein sequence ID" value="ENSP00000321679.4"/>
    <property type="RefSeq nucleotide sequence ID" value="NM_144994.8"/>
    <property type="RefSeq protein sequence ID" value="NP_659431.5"/>
</dbReference>
<dbReference type="UCSC" id="uc002sxa.4">
    <molecule id="Q86SG2-1"/>
    <property type="organism name" value="human"/>
</dbReference>
<dbReference type="AGR" id="HGNC:24470"/>
<dbReference type="CTD" id="200539"/>
<dbReference type="DisGeNET" id="200539"/>
<dbReference type="GeneCards" id="ANKRD23"/>
<dbReference type="HGNC" id="HGNC:24470">
    <property type="gene designation" value="ANKRD23"/>
</dbReference>
<dbReference type="HPA" id="ENSG00000163126">
    <property type="expression patterns" value="Group enriched (skeletal muscle, tongue)"/>
</dbReference>
<dbReference type="MIM" id="610736">
    <property type="type" value="gene"/>
</dbReference>
<dbReference type="neXtProt" id="NX_Q86SG2"/>
<dbReference type="OpenTargets" id="ENSG00000163126"/>
<dbReference type="PharmGKB" id="PA134960626"/>
<dbReference type="VEuPathDB" id="HostDB:ENSG00000163126"/>
<dbReference type="eggNOG" id="KOG0504">
    <property type="taxonomic scope" value="Eukaryota"/>
</dbReference>
<dbReference type="GeneTree" id="ENSGT00940000161920"/>
<dbReference type="HOGENOM" id="CLU_000134_11_2_1"/>
<dbReference type="InParanoid" id="Q86SG2"/>
<dbReference type="OMA" id="AGPWWES"/>
<dbReference type="OrthoDB" id="9995210at2759"/>
<dbReference type="PAN-GO" id="Q86SG2">
    <property type="GO annotations" value="0 GO annotations based on evolutionary models"/>
</dbReference>
<dbReference type="PhylomeDB" id="Q86SG2"/>
<dbReference type="TreeFam" id="TF331650"/>
<dbReference type="PathwayCommons" id="Q86SG2"/>
<dbReference type="SignaLink" id="Q86SG2"/>
<dbReference type="BioGRID-ORCS" id="200539">
    <property type="hits" value="16 hits in 1155 CRISPR screens"/>
</dbReference>
<dbReference type="GeneWiki" id="ANKRD23"/>
<dbReference type="GenomeRNAi" id="200539"/>
<dbReference type="Pharos" id="Q86SG2">
    <property type="development level" value="Tbio"/>
</dbReference>
<dbReference type="PRO" id="PR:Q86SG2"/>
<dbReference type="Proteomes" id="UP000005640">
    <property type="component" value="Chromosome 2"/>
</dbReference>
<dbReference type="RNAct" id="Q86SG2">
    <property type="molecule type" value="protein"/>
</dbReference>
<dbReference type="Bgee" id="ENSG00000163126">
    <property type="expression patterns" value="Expressed in hindlimb stylopod muscle and 131 other cell types or tissues"/>
</dbReference>
<dbReference type="GO" id="GO:0015629">
    <property type="term" value="C:actin cytoskeleton"/>
    <property type="evidence" value="ECO:0000314"/>
    <property type="project" value="HPA"/>
</dbReference>
<dbReference type="GO" id="GO:0005829">
    <property type="term" value="C:cytosol"/>
    <property type="evidence" value="ECO:0000314"/>
    <property type="project" value="HPA"/>
</dbReference>
<dbReference type="GO" id="GO:0031674">
    <property type="term" value="C:I band"/>
    <property type="evidence" value="ECO:0007669"/>
    <property type="project" value="Ensembl"/>
</dbReference>
<dbReference type="GO" id="GO:0014704">
    <property type="term" value="C:intercalated disc"/>
    <property type="evidence" value="ECO:0007669"/>
    <property type="project" value="Ensembl"/>
</dbReference>
<dbReference type="GO" id="GO:0005654">
    <property type="term" value="C:nucleoplasm"/>
    <property type="evidence" value="ECO:0000314"/>
    <property type="project" value="HPA"/>
</dbReference>
<dbReference type="GO" id="GO:0005634">
    <property type="term" value="C:nucleus"/>
    <property type="evidence" value="ECO:0000318"/>
    <property type="project" value="GO_Central"/>
</dbReference>
<dbReference type="GO" id="GO:0031432">
    <property type="term" value="F:titin binding"/>
    <property type="evidence" value="ECO:0000353"/>
    <property type="project" value="BHF-UCL"/>
</dbReference>
<dbReference type="GO" id="GO:0000976">
    <property type="term" value="F:transcription cis-regulatory region binding"/>
    <property type="evidence" value="ECO:0000318"/>
    <property type="project" value="GO_Central"/>
</dbReference>
<dbReference type="GO" id="GO:0006631">
    <property type="term" value="P:fatty acid metabolic process"/>
    <property type="evidence" value="ECO:0007669"/>
    <property type="project" value="Ensembl"/>
</dbReference>
<dbReference type="GO" id="GO:0045944">
    <property type="term" value="P:positive regulation of transcription by RNA polymerase II"/>
    <property type="evidence" value="ECO:0000318"/>
    <property type="project" value="GO_Central"/>
</dbReference>
<dbReference type="GO" id="GO:0060297">
    <property type="term" value="P:regulation of sarcomere organization"/>
    <property type="evidence" value="ECO:0007669"/>
    <property type="project" value="Ensembl"/>
</dbReference>
<dbReference type="GO" id="GO:0035994">
    <property type="term" value="P:response to muscle stretch"/>
    <property type="evidence" value="ECO:0007669"/>
    <property type="project" value="Ensembl"/>
</dbReference>
<dbReference type="FunFam" id="1.25.40.20:FF:000413">
    <property type="entry name" value="Ankyrin repeat domain 23"/>
    <property type="match status" value="1"/>
</dbReference>
<dbReference type="FunFam" id="1.25.40.20:FF:000093">
    <property type="entry name" value="ankyrin repeat domain-containing protein 2"/>
    <property type="match status" value="1"/>
</dbReference>
<dbReference type="Gene3D" id="1.25.40.20">
    <property type="entry name" value="Ankyrin repeat-containing domain"/>
    <property type="match status" value="2"/>
</dbReference>
<dbReference type="InterPro" id="IPR050663">
    <property type="entry name" value="Ankyrin-SOCS_Box"/>
</dbReference>
<dbReference type="InterPro" id="IPR002110">
    <property type="entry name" value="Ankyrin_rpt"/>
</dbReference>
<dbReference type="InterPro" id="IPR036770">
    <property type="entry name" value="Ankyrin_rpt-contain_sf"/>
</dbReference>
<dbReference type="PANTHER" id="PTHR24193:SF122">
    <property type="entry name" value="ANKYRIN REPEAT DOMAIN-CONTAINING PROTEIN 23"/>
    <property type="match status" value="1"/>
</dbReference>
<dbReference type="PANTHER" id="PTHR24193">
    <property type="entry name" value="ANKYRIN REPEAT PROTEIN"/>
    <property type="match status" value="1"/>
</dbReference>
<dbReference type="Pfam" id="PF00023">
    <property type="entry name" value="Ank"/>
    <property type="match status" value="1"/>
</dbReference>
<dbReference type="Pfam" id="PF12796">
    <property type="entry name" value="Ank_2"/>
    <property type="match status" value="1"/>
</dbReference>
<dbReference type="PRINTS" id="PR01415">
    <property type="entry name" value="ANKYRIN"/>
</dbReference>
<dbReference type="SMART" id="SM00248">
    <property type="entry name" value="ANK"/>
    <property type="match status" value="4"/>
</dbReference>
<dbReference type="SUPFAM" id="SSF48403">
    <property type="entry name" value="Ankyrin repeat"/>
    <property type="match status" value="1"/>
</dbReference>
<dbReference type="PROSITE" id="PS50297">
    <property type="entry name" value="ANK_REP_REGION"/>
    <property type="match status" value="1"/>
</dbReference>
<dbReference type="PROSITE" id="PS50088">
    <property type="entry name" value="ANK_REPEAT"/>
    <property type="match status" value="4"/>
</dbReference>
<proteinExistence type="evidence at protein level"/>
<keyword id="KW-0025">Alternative splicing</keyword>
<keyword id="KW-0040">ANK repeat</keyword>
<keyword id="KW-0175">Coiled coil</keyword>
<keyword id="KW-0539">Nucleus</keyword>
<keyword id="KW-1267">Proteomics identification</keyword>
<keyword id="KW-1185">Reference proteome</keyword>
<keyword id="KW-0677">Repeat</keyword>
<sequence>MDFISIQQLVSGERVEGKVLGFGHGVPDPGAWPSDWRRGPQEAVAREKLKLEEEKKKKLERFNSTRFNLDNLADLENLVQRRKKRLRHRVPPRKPEPLVKPQSQAQVEPVGLEMFLKAAAENQEYLIDKYLTDGGDPNAHDKLHRTALHWACLKGHSQLVNKLLVAGATVDARDLLDRTPVFWACRGGHLVILKQLLNQGARVNARDKIGSTPLHVAVRTRHPDCLEHLIECGAHLNAQDKEGDTALHEAVRHGSYKAMKLLLLYGAELGVRNAASVTPVQLARDWQRGIREALQAHVAHPRTRC</sequence>
<organism>
    <name type="scientific">Homo sapiens</name>
    <name type="common">Human</name>
    <dbReference type="NCBI Taxonomy" id="9606"/>
    <lineage>
        <taxon>Eukaryota</taxon>
        <taxon>Metazoa</taxon>
        <taxon>Chordata</taxon>
        <taxon>Craniata</taxon>
        <taxon>Vertebrata</taxon>
        <taxon>Euteleostomi</taxon>
        <taxon>Mammalia</taxon>
        <taxon>Eutheria</taxon>
        <taxon>Euarchontoglires</taxon>
        <taxon>Primates</taxon>
        <taxon>Haplorrhini</taxon>
        <taxon>Catarrhini</taxon>
        <taxon>Hominidae</taxon>
        <taxon>Homo</taxon>
    </lineage>
</organism>
<gene>
    <name type="primary">ANKRD23</name>
    <name type="synonym">DARP</name>
</gene>
<evidence type="ECO:0000250" key="1"/>
<evidence type="ECO:0000255" key="2"/>
<evidence type="ECO:0000256" key="3">
    <source>
        <dbReference type="SAM" id="MobiDB-lite"/>
    </source>
</evidence>
<evidence type="ECO:0000269" key="4">
    <source>
    </source>
</evidence>
<evidence type="ECO:0000269" key="5">
    <source>
    </source>
</evidence>
<evidence type="ECO:0000303" key="6">
    <source>
    </source>
</evidence>
<evidence type="ECO:0000305" key="7"/>
<name>ANR23_HUMAN</name>
<accession>Q86SG2</accession>
<accession>Q711K7</accession>
<accession>Q8NAJ7</accession>
<comment type="function">
    <text>May be involved in the energy metabolism. Could be a molecular link between myofibrillar stretch-induced signaling pathways and muscle gene expression.</text>
</comment>
<comment type="subunit">
    <text evidence="5">Interacts with titin/TTN and MYPN.</text>
</comment>
<comment type="interaction">
    <interactant intactId="EBI-5661893">
        <id>Q86SG2</id>
    </interactant>
    <interactant intactId="EBI-10171570">
        <id>Q68D86</id>
        <label>CCDC102B</label>
    </interactant>
    <organismsDiffer>false</organismsDiffer>
    <experiments>3</experiments>
</comment>
<comment type="interaction">
    <interactant intactId="EBI-5661893">
        <id>Q86SG2</id>
    </interactant>
    <interactant intactId="EBI-10961624">
        <id>Q2TAC2-2</id>
        <label>CCDC57</label>
    </interactant>
    <organismsDiffer>false</organismsDiffer>
    <experiments>3</experiments>
</comment>
<comment type="interaction">
    <interactant intactId="EBI-5661893">
        <id>Q86SG2</id>
    </interactant>
    <interactant intactId="EBI-1045350">
        <id>Q16204</id>
        <label>CCDC6</label>
    </interactant>
    <organismsDiffer>false</organismsDiffer>
    <experiments>3</experiments>
</comment>
<comment type="interaction">
    <interactant intactId="EBI-5661893">
        <id>Q86SG2</id>
    </interactant>
    <interactant intactId="EBI-5278764">
        <id>Q96GN5</id>
        <label>CDCA7L</label>
    </interactant>
    <organismsDiffer>false</organismsDiffer>
    <experiments>3</experiments>
</comment>
<comment type="interaction">
    <interactant intactId="EBI-5661893">
        <id>Q86SG2</id>
    </interactant>
    <interactant intactId="EBI-10192241">
        <id>O95833</id>
        <label>CLIC3</label>
    </interactant>
    <organismsDiffer>false</organismsDiffer>
    <experiments>3</experiments>
</comment>
<comment type="interaction">
    <interactant intactId="EBI-5661893">
        <id>Q86SG2</id>
    </interactant>
    <interactant intactId="EBI-11962928">
        <id>Q9UI47-2</id>
        <label>CTNNA3</label>
    </interactant>
    <organismsDiffer>false</organismsDiffer>
    <experiments>3</experiments>
</comment>
<comment type="interaction">
    <interactant intactId="EBI-5661893">
        <id>Q86SG2</id>
    </interactant>
    <interactant intactId="EBI-10976677">
        <id>G5E9A7</id>
        <label>DMWD</label>
    </interactant>
    <organismsDiffer>false</organismsDiffer>
    <experiments>3</experiments>
</comment>
<comment type="interaction">
    <interactant intactId="EBI-5661893">
        <id>Q86SG2</id>
    </interactant>
    <interactant intactId="EBI-744099">
        <id>Q9H0I2</id>
        <label>ENKD1</label>
    </interactant>
    <organismsDiffer>false</organismsDiffer>
    <experiments>3</experiments>
</comment>
<comment type="interaction">
    <interactant intactId="EBI-5661893">
        <id>Q86SG2</id>
    </interactant>
    <interactant intactId="EBI-7225287">
        <id>Q96MY7</id>
        <label>FAM161B</label>
    </interactant>
    <organismsDiffer>false</organismsDiffer>
    <experiments>3</experiments>
</comment>
<comment type="interaction">
    <interactant intactId="EBI-5661893">
        <id>Q86SG2</id>
    </interactant>
    <interactant intactId="EBI-6658203">
        <id>Q86YD7</id>
        <label>FAM90A1</label>
    </interactant>
    <organismsDiffer>false</organismsDiffer>
    <experiments>3</experiments>
</comment>
<comment type="interaction">
    <interactant intactId="EBI-5661893">
        <id>Q86SG2</id>
    </interactant>
    <interactant intactId="EBI-401755">
        <id>P62993</id>
        <label>GRB2</label>
    </interactant>
    <organismsDiffer>false</organismsDiffer>
    <experiments>3</experiments>
</comment>
<comment type="interaction">
    <interactant intactId="EBI-5661893">
        <id>Q86SG2</id>
    </interactant>
    <interactant intactId="EBI-746704">
        <id>Q9UJC3</id>
        <label>HOOK1</label>
    </interactant>
    <organismsDiffer>false</organismsDiffer>
    <experiments>3</experiments>
</comment>
<comment type="interaction">
    <interactant intactId="EBI-5661893">
        <id>Q86SG2</id>
    </interactant>
    <interactant intactId="EBI-10220600">
        <id>Q8NA54</id>
        <label>IQUB</label>
    </interactant>
    <organismsDiffer>false</organismsDiffer>
    <experiments>3</experiments>
</comment>
<comment type="interaction">
    <interactant intactId="EBI-5661893">
        <id>Q86SG2</id>
    </interactant>
    <interactant intactId="EBI-710124">
        <id>O60341</id>
        <label>KDM1A</label>
    </interactant>
    <organismsDiffer>false</organismsDiffer>
    <experiments>3</experiments>
</comment>
<comment type="interaction">
    <interactant intactId="EBI-5661893">
        <id>Q86SG2</id>
    </interactant>
    <interactant intactId="EBI-14069005">
        <id>Q9BVG8-5</id>
        <label>KIFC3</label>
    </interactant>
    <organismsDiffer>false</organismsDiffer>
    <experiments>3</experiments>
</comment>
<comment type="interaction">
    <interactant intactId="EBI-5661893">
        <id>Q86SG2</id>
    </interactant>
    <interactant intactId="EBI-2548751">
        <id>Q8TD10</id>
        <label>MIPOL1</label>
    </interactant>
    <organismsDiffer>false</organismsDiffer>
    <experiments>3</experiments>
</comment>
<comment type="interaction">
    <interactant intactId="EBI-5661893">
        <id>Q86SG2</id>
    </interactant>
    <interactant intactId="EBI-14066006">
        <id>Q4G0R1</id>
        <label>PIBF1</label>
    </interactant>
    <organismsDiffer>false</organismsDiffer>
    <experiments>3</experiments>
</comment>
<comment type="interaction">
    <interactant intactId="EBI-5661893">
        <id>Q86SG2</id>
    </interactant>
    <interactant intactId="EBI-5452779">
        <id>Q9BUI4</id>
        <label>POLR3C</label>
    </interactant>
    <organismsDiffer>false</organismsDiffer>
    <experiments>3</experiments>
</comment>
<comment type="interaction">
    <interactant intactId="EBI-5661893">
        <id>Q86SG2</id>
    </interactant>
    <interactant intactId="EBI-358489">
        <id>Q96GM5</id>
        <label>SMARCD1</label>
    </interactant>
    <organismsDiffer>false</organismsDiffer>
    <experiments>3</experiments>
</comment>
<comment type="interaction">
    <interactant intactId="EBI-5661893">
        <id>Q86SG2</id>
    </interactant>
    <interactant intactId="EBI-5235340">
        <id>Q7Z699</id>
        <label>SPRED1</label>
    </interactant>
    <organismsDiffer>false</organismsDiffer>
    <experiments>3</experiments>
</comment>
<comment type="interaction">
    <interactant intactId="EBI-5661893">
        <id>Q86SG2</id>
    </interactant>
    <interactant intactId="EBI-25912901">
        <id>O15269-2</id>
        <label>SPTLC1</label>
    </interactant>
    <organismsDiffer>false</organismsDiffer>
    <experiments>3</experiments>
</comment>
<comment type="interaction">
    <interactant intactId="EBI-5661893">
        <id>Q86SG2</id>
    </interactant>
    <interactant intactId="EBI-725997">
        <id>Q8WV44</id>
        <label>TRIM41</label>
    </interactant>
    <organismsDiffer>false</organismsDiffer>
    <experiments>3</experiments>
</comment>
<comment type="interaction">
    <interactant intactId="EBI-5661893">
        <id>Q86SG2</id>
    </interactant>
    <interactant intactId="EBI-1048893">
        <id>P54577</id>
        <label>YARS1</label>
    </interactant>
    <organismsDiffer>false</organismsDiffer>
    <experiments>3</experiments>
</comment>
<comment type="subcellular location">
    <subcellularLocation>
        <location>Nucleus</location>
    </subcellularLocation>
    <text evidence="1">Sarcomeric I-band and some intercalated disks.</text>
</comment>
<comment type="alternative products">
    <event type="alternative splicing"/>
    <isoform>
        <id>Q86SG2-1</id>
        <name>1</name>
        <sequence type="displayed"/>
    </isoform>
    <isoform>
        <id>Q86SG2-2</id>
        <name>2</name>
        <sequence type="described" ref="VSP_019424"/>
    </isoform>
</comment>
<comment type="tissue specificity">
    <text evidence="4">Mainly expressed in heart, skeletal muscle and brown adipose tissues.</text>
</comment>
<protein>
    <recommendedName>
        <fullName>Ankyrin repeat domain-containing protein 23</fullName>
    </recommendedName>
    <alternativeName>
        <fullName>Diabetes-related ankyrin repeat protein</fullName>
    </alternativeName>
    <alternativeName>
        <fullName>Muscle ankyrin repeat protein 3</fullName>
    </alternativeName>
</protein>